<protein>
    <recommendedName>
        <fullName>Cytochrome b</fullName>
    </recommendedName>
    <alternativeName>
        <fullName>Complex III subunit 3</fullName>
    </alternativeName>
    <alternativeName>
        <fullName>Complex III subunit III</fullName>
    </alternativeName>
    <alternativeName>
        <fullName>Cytochrome b-c1 complex subunit 3</fullName>
    </alternativeName>
    <alternativeName>
        <fullName>Ubiquinol-cytochrome-c reductase complex cytochrome b subunit</fullName>
    </alternativeName>
</protein>
<gene>
    <name type="primary">MT-CYB</name>
    <name type="synonym">COB</name>
    <name type="synonym">CYTB</name>
    <name type="synonym">MTCYB</name>
</gene>
<accession>Q6XZH3</accession>
<dbReference type="EMBL" id="AY196164">
    <property type="protein sequence ID" value="AAP35015.1"/>
    <property type="molecule type" value="Genomic_DNA"/>
</dbReference>
<dbReference type="GO" id="GO:0005743">
    <property type="term" value="C:mitochondrial inner membrane"/>
    <property type="evidence" value="ECO:0007669"/>
    <property type="project" value="UniProtKB-SubCell"/>
</dbReference>
<dbReference type="GO" id="GO:0045275">
    <property type="term" value="C:respiratory chain complex III"/>
    <property type="evidence" value="ECO:0007669"/>
    <property type="project" value="InterPro"/>
</dbReference>
<dbReference type="GO" id="GO:0046872">
    <property type="term" value="F:metal ion binding"/>
    <property type="evidence" value="ECO:0007669"/>
    <property type="project" value="UniProtKB-KW"/>
</dbReference>
<dbReference type="GO" id="GO:0008121">
    <property type="term" value="F:ubiquinol-cytochrome-c reductase activity"/>
    <property type="evidence" value="ECO:0007669"/>
    <property type="project" value="InterPro"/>
</dbReference>
<dbReference type="GO" id="GO:0006122">
    <property type="term" value="P:mitochondrial electron transport, ubiquinol to cytochrome c"/>
    <property type="evidence" value="ECO:0007669"/>
    <property type="project" value="TreeGrafter"/>
</dbReference>
<dbReference type="CDD" id="cd00290">
    <property type="entry name" value="cytochrome_b_C"/>
    <property type="match status" value="1"/>
</dbReference>
<dbReference type="CDD" id="cd00284">
    <property type="entry name" value="Cytochrome_b_N"/>
    <property type="match status" value="1"/>
</dbReference>
<dbReference type="FunFam" id="1.20.810.10:FF:000002">
    <property type="entry name" value="Cytochrome b"/>
    <property type="match status" value="1"/>
</dbReference>
<dbReference type="Gene3D" id="1.20.810.10">
    <property type="entry name" value="Cytochrome Bc1 Complex, Chain C"/>
    <property type="match status" value="1"/>
</dbReference>
<dbReference type="InterPro" id="IPR005798">
    <property type="entry name" value="Cyt_b/b6_C"/>
</dbReference>
<dbReference type="InterPro" id="IPR036150">
    <property type="entry name" value="Cyt_b/b6_C_sf"/>
</dbReference>
<dbReference type="InterPro" id="IPR005797">
    <property type="entry name" value="Cyt_b/b6_N"/>
</dbReference>
<dbReference type="InterPro" id="IPR027387">
    <property type="entry name" value="Cytb/b6-like_sf"/>
</dbReference>
<dbReference type="InterPro" id="IPR030689">
    <property type="entry name" value="Cytochrome_b"/>
</dbReference>
<dbReference type="InterPro" id="IPR048260">
    <property type="entry name" value="Cytochrome_b_C_euk/bac"/>
</dbReference>
<dbReference type="InterPro" id="IPR048259">
    <property type="entry name" value="Cytochrome_b_N_euk/bac"/>
</dbReference>
<dbReference type="InterPro" id="IPR016174">
    <property type="entry name" value="Di-haem_cyt_TM"/>
</dbReference>
<dbReference type="PANTHER" id="PTHR19271">
    <property type="entry name" value="CYTOCHROME B"/>
    <property type="match status" value="1"/>
</dbReference>
<dbReference type="PANTHER" id="PTHR19271:SF16">
    <property type="entry name" value="CYTOCHROME B"/>
    <property type="match status" value="1"/>
</dbReference>
<dbReference type="Pfam" id="PF00032">
    <property type="entry name" value="Cytochrom_B_C"/>
    <property type="match status" value="1"/>
</dbReference>
<dbReference type="Pfam" id="PF00033">
    <property type="entry name" value="Cytochrome_B"/>
    <property type="match status" value="1"/>
</dbReference>
<dbReference type="PIRSF" id="PIRSF038885">
    <property type="entry name" value="COB"/>
    <property type="match status" value="1"/>
</dbReference>
<dbReference type="SUPFAM" id="SSF81648">
    <property type="entry name" value="a domain/subunit of cytochrome bc1 complex (Ubiquinol-cytochrome c reductase)"/>
    <property type="match status" value="1"/>
</dbReference>
<dbReference type="SUPFAM" id="SSF81342">
    <property type="entry name" value="Transmembrane di-heme cytochromes"/>
    <property type="match status" value="1"/>
</dbReference>
<dbReference type="PROSITE" id="PS51003">
    <property type="entry name" value="CYTB_CTER"/>
    <property type="match status" value="1"/>
</dbReference>
<dbReference type="PROSITE" id="PS51002">
    <property type="entry name" value="CYTB_NTER"/>
    <property type="match status" value="1"/>
</dbReference>
<evidence type="ECO:0000250" key="1"/>
<evidence type="ECO:0000250" key="2">
    <source>
        <dbReference type="UniProtKB" id="P00157"/>
    </source>
</evidence>
<evidence type="ECO:0000255" key="3">
    <source>
        <dbReference type="PROSITE-ProRule" id="PRU00967"/>
    </source>
</evidence>
<evidence type="ECO:0000255" key="4">
    <source>
        <dbReference type="PROSITE-ProRule" id="PRU00968"/>
    </source>
</evidence>
<reference key="1">
    <citation type="journal article" date="2003" name="Mamm. Biol.">
        <title>Phylogenetic analysis of sigmodontine rodents (Muroidea), with special reference to the akodont genus Deltamys.</title>
        <authorList>
            <person name="D'Elia G."/>
            <person name="Gonzalez E.M."/>
            <person name="Pardinas U.F.J."/>
        </authorList>
    </citation>
    <scope>NUCLEOTIDE SEQUENCE [GENOMIC DNA]</scope>
</reference>
<name>CYB_AKOAF</name>
<geneLocation type="mitochondrion"/>
<keyword id="KW-0249">Electron transport</keyword>
<keyword id="KW-0349">Heme</keyword>
<keyword id="KW-0408">Iron</keyword>
<keyword id="KW-0472">Membrane</keyword>
<keyword id="KW-0479">Metal-binding</keyword>
<keyword id="KW-0496">Mitochondrion</keyword>
<keyword id="KW-0999">Mitochondrion inner membrane</keyword>
<keyword id="KW-0679">Respiratory chain</keyword>
<keyword id="KW-0812">Transmembrane</keyword>
<keyword id="KW-1133">Transmembrane helix</keyword>
<keyword id="KW-0813">Transport</keyword>
<keyword id="KW-0830">Ubiquinone</keyword>
<organism>
    <name type="scientific">Akodon affinis</name>
    <name type="common">Colombian grass mouse</name>
    <dbReference type="NCBI Taxonomy" id="230186"/>
    <lineage>
        <taxon>Eukaryota</taxon>
        <taxon>Metazoa</taxon>
        <taxon>Chordata</taxon>
        <taxon>Craniata</taxon>
        <taxon>Vertebrata</taxon>
        <taxon>Euteleostomi</taxon>
        <taxon>Mammalia</taxon>
        <taxon>Eutheria</taxon>
        <taxon>Euarchontoglires</taxon>
        <taxon>Glires</taxon>
        <taxon>Rodentia</taxon>
        <taxon>Myomorpha</taxon>
        <taxon>Muroidea</taxon>
        <taxon>Cricetidae</taxon>
        <taxon>Sigmodontinae</taxon>
        <taxon>Akodon</taxon>
    </lineage>
</organism>
<feature type="chain" id="PRO_0000254970" description="Cytochrome b">
    <location>
        <begin position="1"/>
        <end position="379"/>
    </location>
</feature>
<feature type="transmembrane region" description="Helical" evidence="2">
    <location>
        <begin position="33"/>
        <end position="53"/>
    </location>
</feature>
<feature type="transmembrane region" description="Helical" evidence="2">
    <location>
        <begin position="77"/>
        <end position="98"/>
    </location>
</feature>
<feature type="transmembrane region" description="Helical" evidence="2">
    <location>
        <begin position="113"/>
        <end position="133"/>
    </location>
</feature>
<feature type="transmembrane region" description="Helical" evidence="2">
    <location>
        <begin position="178"/>
        <end position="198"/>
    </location>
</feature>
<feature type="transmembrane region" description="Helical" evidence="2">
    <location>
        <begin position="226"/>
        <end position="246"/>
    </location>
</feature>
<feature type="transmembrane region" description="Helical" evidence="2">
    <location>
        <begin position="288"/>
        <end position="308"/>
    </location>
</feature>
<feature type="transmembrane region" description="Helical" evidence="2">
    <location>
        <begin position="320"/>
        <end position="340"/>
    </location>
</feature>
<feature type="transmembrane region" description="Helical" evidence="2">
    <location>
        <begin position="347"/>
        <end position="367"/>
    </location>
</feature>
<feature type="binding site" description="axial binding residue" evidence="2">
    <location>
        <position position="83"/>
    </location>
    <ligand>
        <name>heme b</name>
        <dbReference type="ChEBI" id="CHEBI:60344"/>
        <label>b562</label>
    </ligand>
    <ligandPart>
        <name>Fe</name>
        <dbReference type="ChEBI" id="CHEBI:18248"/>
    </ligandPart>
</feature>
<feature type="binding site" description="axial binding residue" evidence="2">
    <location>
        <position position="97"/>
    </location>
    <ligand>
        <name>heme b</name>
        <dbReference type="ChEBI" id="CHEBI:60344"/>
        <label>b566</label>
    </ligand>
    <ligandPart>
        <name>Fe</name>
        <dbReference type="ChEBI" id="CHEBI:18248"/>
    </ligandPart>
</feature>
<feature type="binding site" description="axial binding residue" evidence="2">
    <location>
        <position position="182"/>
    </location>
    <ligand>
        <name>heme b</name>
        <dbReference type="ChEBI" id="CHEBI:60344"/>
        <label>b562</label>
    </ligand>
    <ligandPart>
        <name>Fe</name>
        <dbReference type="ChEBI" id="CHEBI:18248"/>
    </ligandPart>
</feature>
<feature type="binding site" description="axial binding residue" evidence="2">
    <location>
        <position position="196"/>
    </location>
    <ligand>
        <name>heme b</name>
        <dbReference type="ChEBI" id="CHEBI:60344"/>
        <label>b566</label>
    </ligand>
    <ligandPart>
        <name>Fe</name>
        <dbReference type="ChEBI" id="CHEBI:18248"/>
    </ligandPart>
</feature>
<feature type="binding site" evidence="2">
    <location>
        <position position="201"/>
    </location>
    <ligand>
        <name>a ubiquinone</name>
        <dbReference type="ChEBI" id="CHEBI:16389"/>
    </ligand>
</feature>
<comment type="function">
    <text evidence="2">Component of the ubiquinol-cytochrome c reductase complex (complex III or cytochrome b-c1 complex) that is part of the mitochondrial respiratory chain. The b-c1 complex mediates electron transfer from ubiquinol to cytochrome c. Contributes to the generation of a proton gradient across the mitochondrial membrane that is then used for ATP synthesis.</text>
</comment>
<comment type="cofactor">
    <cofactor evidence="2">
        <name>heme b</name>
        <dbReference type="ChEBI" id="CHEBI:60344"/>
    </cofactor>
    <text evidence="2">Binds 2 heme b groups non-covalently.</text>
</comment>
<comment type="subunit">
    <text evidence="2">The cytochrome bc1 complex contains 11 subunits: 3 respiratory subunits (MT-CYB, CYC1 and UQCRFS1), 2 core proteins (UQCRC1 and UQCRC2) and 6 low-molecular weight proteins (UQCRH/QCR6, UQCRB/QCR7, UQCRQ/QCR8, UQCR10/QCR9, UQCR11/QCR10 and a cleavage product of UQCRFS1). This cytochrome bc1 complex then forms a dimer.</text>
</comment>
<comment type="subcellular location">
    <subcellularLocation>
        <location evidence="2">Mitochondrion inner membrane</location>
        <topology evidence="2">Multi-pass membrane protein</topology>
    </subcellularLocation>
</comment>
<comment type="miscellaneous">
    <text evidence="1">Heme 1 (or BL or b562) is low-potential and absorbs at about 562 nm, and heme 2 (or BH or b566) is high-potential and absorbs at about 566 nm.</text>
</comment>
<comment type="similarity">
    <text evidence="3 4">Belongs to the cytochrome b family.</text>
</comment>
<comment type="caution">
    <text evidence="2">The full-length protein contains only eight transmembrane helices, not nine as predicted by bioinformatics tools.</text>
</comment>
<sequence length="379" mass="42602">MKILRKNHPLLKIVNHSFIDLPTPSNISSWWNFGSLLGVCLMIQILTGLFLAMHYTSDTTTAFSSVAHICRDVNYGWLIRYLHANGASMFFICLFIHVGRGIYYGSYVLSETWNIGIILFLTTMATAFVGYVLPWGQMSFWGATVITNLLSAIPYIGSTLVEWIWGGFSVDKATLTRFFAFHFILPFIITAFALVHLLFLHETGSNNPSGLNSDSDKIPFHPYYTIKDLLGIFLLLLALMILALFFPDVLGDPDNFTPANPLNTPAHIKPEWYFLFAYAILRSIPNKLGGVLALILSILILAIFPLLNVSKQHGLIFRPITQTIYWTFIANLLVLTWIGGQPVEYPFTTIGQIASITYFTXIIILMPVSNTIXNNIIKL</sequence>
<proteinExistence type="inferred from homology"/>